<evidence type="ECO:0000255" key="1">
    <source>
        <dbReference type="PROSITE-ProRule" id="PRU00303"/>
    </source>
</evidence>
<evidence type="ECO:0000305" key="2"/>
<name>Y442_STAAR</name>
<accession>Q6GJN1</accession>
<organism>
    <name type="scientific">Staphylococcus aureus (strain MRSA252)</name>
    <dbReference type="NCBI Taxonomy" id="282458"/>
    <lineage>
        <taxon>Bacteria</taxon>
        <taxon>Bacillati</taxon>
        <taxon>Bacillota</taxon>
        <taxon>Bacilli</taxon>
        <taxon>Bacillales</taxon>
        <taxon>Staphylococcaceae</taxon>
        <taxon>Staphylococcus</taxon>
    </lineage>
</organism>
<reference key="1">
    <citation type="journal article" date="2004" name="Proc. Natl. Acad. Sci. U.S.A.">
        <title>Complete genomes of two clinical Staphylococcus aureus strains: evidence for the rapid evolution of virulence and drug resistance.</title>
        <authorList>
            <person name="Holden M.T.G."/>
            <person name="Feil E.J."/>
            <person name="Lindsay J.A."/>
            <person name="Peacock S.J."/>
            <person name="Day N.P.J."/>
            <person name="Enright M.C."/>
            <person name="Foster T.J."/>
            <person name="Moore C.E."/>
            <person name="Hurst L."/>
            <person name="Atkin R."/>
            <person name="Barron A."/>
            <person name="Bason N."/>
            <person name="Bentley S.D."/>
            <person name="Chillingworth C."/>
            <person name="Chillingworth T."/>
            <person name="Churcher C."/>
            <person name="Clark L."/>
            <person name="Corton C."/>
            <person name="Cronin A."/>
            <person name="Doggett J."/>
            <person name="Dowd L."/>
            <person name="Feltwell T."/>
            <person name="Hance Z."/>
            <person name="Harris B."/>
            <person name="Hauser H."/>
            <person name="Holroyd S."/>
            <person name="Jagels K."/>
            <person name="James K.D."/>
            <person name="Lennard N."/>
            <person name="Line A."/>
            <person name="Mayes R."/>
            <person name="Moule S."/>
            <person name="Mungall K."/>
            <person name="Ormond D."/>
            <person name="Quail M.A."/>
            <person name="Rabbinowitsch E."/>
            <person name="Rutherford K.M."/>
            <person name="Sanders M."/>
            <person name="Sharp S."/>
            <person name="Simmonds M."/>
            <person name="Stevens K."/>
            <person name="Whitehead S."/>
            <person name="Barrell B.G."/>
            <person name="Spratt B.G."/>
            <person name="Parkhill J."/>
        </authorList>
    </citation>
    <scope>NUCLEOTIDE SEQUENCE [LARGE SCALE GENOMIC DNA]</scope>
    <source>
        <strain>MRSA252</strain>
    </source>
</reference>
<proteinExistence type="inferred from homology"/>
<comment type="subcellular location">
    <subcellularLocation>
        <location evidence="1">Cell membrane</location>
        <topology evidence="1">Lipid-anchor</topology>
    </subcellularLocation>
</comment>
<comment type="similarity">
    <text evidence="2">Belongs to the staphylococcal tandem lipoprotein family.</text>
</comment>
<protein>
    <recommendedName>
        <fullName>Uncharacterized lipoprotein SAR0442</fullName>
    </recommendedName>
</protein>
<dbReference type="EMBL" id="BX571856">
    <property type="protein sequence ID" value="CAG39462.1"/>
    <property type="molecule type" value="Genomic_DNA"/>
</dbReference>
<dbReference type="RefSeq" id="WP_000540914.1">
    <property type="nucleotide sequence ID" value="NC_002952.2"/>
</dbReference>
<dbReference type="SMR" id="Q6GJN1"/>
<dbReference type="KEGG" id="sar:SAR0442"/>
<dbReference type="HOGENOM" id="CLU_071589_0_1_9"/>
<dbReference type="Proteomes" id="UP000000596">
    <property type="component" value="Chromosome"/>
</dbReference>
<dbReference type="GO" id="GO:0005886">
    <property type="term" value="C:plasma membrane"/>
    <property type="evidence" value="ECO:0007669"/>
    <property type="project" value="UniProtKB-SubCell"/>
</dbReference>
<dbReference type="Gene3D" id="2.50.20.40">
    <property type="match status" value="1"/>
</dbReference>
<dbReference type="InterPro" id="IPR007595">
    <property type="entry name" value="Csa"/>
</dbReference>
<dbReference type="InterPro" id="IPR038641">
    <property type="entry name" value="Csa_sf"/>
</dbReference>
<dbReference type="NCBIfam" id="TIGR01742">
    <property type="entry name" value="SA_tandem_lipo"/>
    <property type="match status" value="1"/>
</dbReference>
<dbReference type="Pfam" id="PF04507">
    <property type="entry name" value="DUF576"/>
    <property type="match status" value="1"/>
</dbReference>
<dbReference type="PROSITE" id="PS51257">
    <property type="entry name" value="PROKAR_LIPOPROTEIN"/>
    <property type="match status" value="1"/>
</dbReference>
<keyword id="KW-1003">Cell membrane</keyword>
<keyword id="KW-0449">Lipoprotein</keyword>
<keyword id="KW-0472">Membrane</keyword>
<keyword id="KW-0564">Palmitate</keyword>
<keyword id="KW-0732">Signal</keyword>
<gene>
    <name type="ordered locus">SAR0442</name>
</gene>
<sequence>MGYLKRIGMCISLLIVIIFVTSCGGGNKITGDSKETQIKKSFAKTLDMYPIKNLEDLYDKEGYRDGEFEKGDKGMWTIYTDFAKSNKSDELDDEGMVLNLDRNTRTAKGYYFVKKFYEKDKFSDRKNYKVEMKNNKIILLDKVNDPNLKERIENFKFFGQYANFKDLENYNNGDVSINWNVPSYDVEYKMSNKDENVKQLRSRYNIPTDKAPMLKMHIDGDLKGSSVGYKRLEIDFSKEDRDISVIDYLSYKPAKK</sequence>
<feature type="signal peptide" evidence="1">
    <location>
        <begin position="1"/>
        <end position="22"/>
    </location>
</feature>
<feature type="chain" id="PRO_0000282156" description="Uncharacterized lipoprotein SAR0442">
    <location>
        <begin position="23"/>
        <end position="256"/>
    </location>
</feature>
<feature type="lipid moiety-binding region" description="N-palmitoyl cysteine" evidence="1">
    <location>
        <position position="23"/>
    </location>
</feature>
<feature type="lipid moiety-binding region" description="S-diacylglycerol cysteine" evidence="1">
    <location>
        <position position="23"/>
    </location>
</feature>